<sequence length="242" mass="27593">MMKSLYAVNLVLLLLLAFFAPAPATRELNMRAAPSDSTRVVDYATTERLLRAHSSDKEEQKEEEERAISINFSSLEKIFKKVTSAKTTELQGMLKADEALGSAFKTLKLGTMRIGKDGSVDPKMVAKFLSSRNFKIWSQHAVKINKDDPYGEMLKALTNVFGEKNVAMMILVGNLSRNSRDVAKKLEKAQFYKWYFVDKYKTADEVFTNVLKADRNRIHGYGREKEIWGDYAKYVTTTVMKY</sequence>
<keyword id="KW-1032">Host cell membrane</keyword>
<keyword id="KW-1043">Host membrane</keyword>
<keyword id="KW-0472">Membrane</keyword>
<keyword id="KW-1185">Reference proteome</keyword>
<keyword id="KW-0964">Secreted</keyword>
<keyword id="KW-0732">Signal</keyword>
<keyword id="KW-0843">Virulence</keyword>
<dbReference type="EMBL" id="DS028168">
    <property type="protein sequence ID" value="EEY66657.1"/>
    <property type="molecule type" value="Genomic_DNA"/>
</dbReference>
<dbReference type="RefSeq" id="XP_002896958.1">
    <property type="nucleotide sequence ID" value="XM_002896912.1"/>
</dbReference>
<dbReference type="SMR" id="D0NVI0"/>
<dbReference type="STRING" id="403677.D0NVI0"/>
<dbReference type="EnsemblProtists" id="PITG_16737T0">
    <property type="protein sequence ID" value="PITG_16737T0"/>
    <property type="gene ID" value="PITG_16737"/>
</dbReference>
<dbReference type="GeneID" id="9465522"/>
<dbReference type="KEGG" id="pif:PITG_16737"/>
<dbReference type="VEuPathDB" id="FungiDB:PITG_16737"/>
<dbReference type="eggNOG" id="ENOG502STM1">
    <property type="taxonomic scope" value="Eukaryota"/>
</dbReference>
<dbReference type="HOGENOM" id="CLU_1196877_0_0_1"/>
<dbReference type="InParanoid" id="D0NVI0"/>
<dbReference type="OMA" id="TRELNMR"/>
<dbReference type="OrthoDB" id="126873at2759"/>
<dbReference type="Proteomes" id="UP000006643">
    <property type="component" value="Partially assembled WGS sequence"/>
</dbReference>
<dbReference type="GO" id="GO:0005576">
    <property type="term" value="C:extracellular region"/>
    <property type="evidence" value="ECO:0007669"/>
    <property type="project" value="UniProtKB-SubCell"/>
</dbReference>
<dbReference type="GO" id="GO:0020002">
    <property type="term" value="C:host cell plasma membrane"/>
    <property type="evidence" value="ECO:0007669"/>
    <property type="project" value="UniProtKB-SubCell"/>
</dbReference>
<dbReference type="GO" id="GO:0016020">
    <property type="term" value="C:membrane"/>
    <property type="evidence" value="ECO:0007669"/>
    <property type="project" value="UniProtKB-KW"/>
</dbReference>
<organism>
    <name type="scientific">Phytophthora infestans (strain T30-4)</name>
    <name type="common">Potato late blight agent</name>
    <dbReference type="NCBI Taxonomy" id="403677"/>
    <lineage>
        <taxon>Eukaryota</taxon>
        <taxon>Sar</taxon>
        <taxon>Stramenopiles</taxon>
        <taxon>Oomycota</taxon>
        <taxon>Peronosporales</taxon>
        <taxon>Peronosporaceae</taxon>
        <taxon>Phytophthora</taxon>
    </lineage>
</organism>
<feature type="signal peptide" evidence="1">
    <location>
        <begin position="1"/>
        <end position="24"/>
    </location>
</feature>
<feature type="chain" id="PRO_5003013691" description="RxLR effector protein PexRD15">
    <location>
        <begin position="25"/>
        <end position="242"/>
    </location>
</feature>
<feature type="short sequence motif" description="RxLR-dEER" evidence="9">
    <location>
        <begin position="48"/>
        <end position="66"/>
    </location>
</feature>
<comment type="function">
    <text evidence="6">Effector that enhances P.infestans colonization of Nicotiana benthamiana leaves.</text>
</comment>
<comment type="subcellular location">
    <subcellularLocation>
        <location evidence="6">Secreted</location>
    </subcellularLocation>
    <subcellularLocation>
        <location evidence="6">Host cell membrane</location>
    </subcellularLocation>
</comment>
<comment type="induction">
    <text evidence="2 3 4 5">Expression is induced during host plant infection.</text>
</comment>
<comment type="domain">
    <text evidence="9">The RxLR-dEER motif acts to carry the protein into the host cell cytoplasm through binding to cell surface phosphatidylinositol-3-phosphate.</text>
</comment>
<comment type="similarity">
    <text evidence="8">Belongs to the RxLR effector family.</text>
</comment>
<name>RD15_PHYIT</name>
<protein>
    <recommendedName>
        <fullName evidence="7">RxLR effector protein PexRD15</fullName>
    </recommendedName>
</protein>
<proteinExistence type="evidence at transcript level"/>
<gene>
    <name evidence="7" type="primary">PexRD15</name>
    <name type="ORF">PITG_16737</name>
</gene>
<reference key="1">
    <citation type="journal article" date="2009" name="Nature">
        <title>Genome sequence and analysis of the Irish potato famine pathogen Phytophthora infestans.</title>
        <authorList>
            <consortium name="The Broad Institute Genome Sequencing Platform"/>
            <person name="Haas B.J."/>
            <person name="Kamoun S."/>
            <person name="Zody M.C."/>
            <person name="Jiang R.H."/>
            <person name="Handsaker R.E."/>
            <person name="Cano L.M."/>
            <person name="Grabherr M."/>
            <person name="Kodira C.D."/>
            <person name="Raffaele S."/>
            <person name="Torto-Alalibo T."/>
            <person name="Bozkurt T.O."/>
            <person name="Ah-Fong A.M."/>
            <person name="Alvarado L."/>
            <person name="Anderson V.L."/>
            <person name="Armstrong M.R."/>
            <person name="Avrova A."/>
            <person name="Baxter L."/>
            <person name="Beynon J."/>
            <person name="Boevink P.C."/>
            <person name="Bollmann S.R."/>
            <person name="Bos J.I."/>
            <person name="Bulone V."/>
            <person name="Cai G."/>
            <person name="Cakir C."/>
            <person name="Carrington J.C."/>
            <person name="Chawner M."/>
            <person name="Conti L."/>
            <person name="Costanzo S."/>
            <person name="Ewan R."/>
            <person name="Fahlgren N."/>
            <person name="Fischbach M.A."/>
            <person name="Fugelstad J."/>
            <person name="Gilroy E.M."/>
            <person name="Gnerre S."/>
            <person name="Green P.J."/>
            <person name="Grenville-Briggs L.J."/>
            <person name="Griffith J."/>
            <person name="Grunwald N.J."/>
            <person name="Horn K."/>
            <person name="Horner N.R."/>
            <person name="Hu C.H."/>
            <person name="Huitema E."/>
            <person name="Jeong D.H."/>
            <person name="Jones A.M."/>
            <person name="Jones J.D."/>
            <person name="Jones R.W."/>
            <person name="Karlsson E.K."/>
            <person name="Kunjeti S.G."/>
            <person name="Lamour K."/>
            <person name="Liu Z."/>
            <person name="Ma L."/>
            <person name="Maclean D."/>
            <person name="Chibucos M.C."/>
            <person name="McDonald H."/>
            <person name="McWalters J."/>
            <person name="Meijer H.J."/>
            <person name="Morgan W."/>
            <person name="Morris P.F."/>
            <person name="Munro C.A."/>
            <person name="O'Neill K."/>
            <person name="Ospina-Giraldo M."/>
            <person name="Pinzon A."/>
            <person name="Pritchard L."/>
            <person name="Ramsahoye B."/>
            <person name="Ren Q."/>
            <person name="Restrepo S."/>
            <person name="Roy S."/>
            <person name="Sadanandom A."/>
            <person name="Savidor A."/>
            <person name="Schornack S."/>
            <person name="Schwartz D.C."/>
            <person name="Schumann U.D."/>
            <person name="Schwessinger B."/>
            <person name="Seyer L."/>
            <person name="Sharpe T."/>
            <person name="Silvar C."/>
            <person name="Song J."/>
            <person name="Studholme D.J."/>
            <person name="Sykes S."/>
            <person name="Thines M."/>
            <person name="van de Vondervoort P.J."/>
            <person name="Phuntumart V."/>
            <person name="Wawra S."/>
            <person name="Weide R."/>
            <person name="Win J."/>
            <person name="Young C."/>
            <person name="Zhou S."/>
            <person name="Fry W."/>
            <person name="Meyers B.C."/>
            <person name="van West P."/>
            <person name="Ristaino J."/>
            <person name="Govers F."/>
            <person name="Birch P.R."/>
            <person name="Whisson S.C."/>
            <person name="Judelson H.S."/>
            <person name="Nusbaum C."/>
        </authorList>
    </citation>
    <scope>NUCLEOTIDE SEQUENCE [LARGE SCALE GENOMIC DNA]</scope>
    <source>
        <strain>T30-4</strain>
    </source>
</reference>
<reference key="2">
    <citation type="journal article" date="2007" name="Nature">
        <title>A translocation signal for delivery of oomycete effector proteins into host plant cells.</title>
        <authorList>
            <person name="Whisson S.C."/>
            <person name="Boevink P.C."/>
            <person name="Moleleki L."/>
            <person name="Avrova A.O."/>
            <person name="Morales J.G."/>
            <person name="Gilroy E.M."/>
            <person name="Armstrong M.R."/>
            <person name="Grouffaud S."/>
            <person name="van West P."/>
            <person name="Chapman S."/>
            <person name="Hein I."/>
            <person name="Toth I.K."/>
            <person name="Pritchard L."/>
            <person name="Birch P.R."/>
        </authorList>
    </citation>
    <scope>INDUCTION</scope>
    <scope>DOMAIN</scope>
</reference>
<reference key="3">
    <citation type="journal article" date="2009" name="Plant Cell">
        <title>In planta expression screens of Phytophthora infestans RXLR effectors reveal diverse phenotypes, including activation of the Solanum bulbocastanum disease resistance protein Rpi-blb2.</title>
        <authorList>
            <person name="Oh S.K."/>
            <person name="Young C."/>
            <person name="Lee M."/>
            <person name="Oliva R."/>
            <person name="Bozkurt T.O."/>
            <person name="Cano L.M."/>
            <person name="Win J."/>
            <person name="Bos J.I."/>
            <person name="Liu H.Y."/>
            <person name="van Damme M."/>
            <person name="Morgan W."/>
            <person name="Choi D."/>
            <person name="Van der Vossen E.A."/>
            <person name="Vleeshouwers V.G."/>
            <person name="Kamoun S."/>
        </authorList>
    </citation>
    <scope>INDUCTION</scope>
</reference>
<reference key="4">
    <citation type="journal article" date="2017" name="BMC Genomics">
        <title>RNA-seq of life stages of the oomycete Phytophthora infestans reveals dynamic changes in metabolic, signal transduction, and pathogenesis genes and a major role for calcium signaling in development.</title>
        <authorList>
            <person name="Ah-Fong A.M."/>
            <person name="Kim K.S."/>
            <person name="Judelson H.S."/>
        </authorList>
    </citation>
    <scope>INDUCTION</scope>
</reference>
<reference key="5">
    <citation type="journal article" date="2017" name="Front. Plant Sci.">
        <title>Conserved RXLR effector genes of Phytophthora infestans expressed at the early stage of potato infection are suppressive to host defense.</title>
        <authorList>
            <person name="Yin J."/>
            <person name="Gu B."/>
            <person name="Huang G."/>
            <person name="Tian Y."/>
            <person name="Quan J."/>
            <person name="Lindqvist-Kreuze H."/>
            <person name="Shan W."/>
        </authorList>
    </citation>
    <scope>INDUCTION</scope>
</reference>
<reference key="6">
    <citation type="journal article" date="2019" name="J. Exp. Bot.">
        <title>Phytophthora infestans RXLR effectors act in concert at diverse subcellular locations to enhance host colonization.</title>
        <authorList>
            <person name="Wang S."/>
            <person name="McLellan H."/>
            <person name="Bukharova T."/>
            <person name="He Q."/>
            <person name="Murphy F."/>
            <person name="Shi J."/>
            <person name="Sun S."/>
            <person name="van Weymers P."/>
            <person name="Ren Y."/>
            <person name="Thilliez G."/>
            <person name="Wang H."/>
            <person name="Chen X."/>
            <person name="Engelhardt S."/>
            <person name="Vleeshouwers V."/>
            <person name="Gilroy E.M."/>
            <person name="Whisson S.C."/>
            <person name="Hein I."/>
            <person name="Wang X."/>
            <person name="Tian Z."/>
            <person name="Birch P.R.J."/>
            <person name="Boevink P.C."/>
        </authorList>
    </citation>
    <scope>FUNCTION</scope>
    <scope>SUBCELLULAR LOCATION</scope>
</reference>
<evidence type="ECO:0000255" key="1"/>
<evidence type="ECO:0000269" key="2">
    <source>
    </source>
</evidence>
<evidence type="ECO:0000269" key="3">
    <source>
    </source>
</evidence>
<evidence type="ECO:0000269" key="4">
    <source>
    </source>
</evidence>
<evidence type="ECO:0000269" key="5">
    <source>
    </source>
</evidence>
<evidence type="ECO:0000269" key="6">
    <source>
    </source>
</evidence>
<evidence type="ECO:0000303" key="7">
    <source>
    </source>
</evidence>
<evidence type="ECO:0000305" key="8"/>
<evidence type="ECO:0000305" key="9">
    <source>
    </source>
</evidence>
<accession>D0NVI0</accession>